<name>RS8_ALCBS</name>
<keyword id="KW-1185">Reference proteome</keyword>
<keyword id="KW-0687">Ribonucleoprotein</keyword>
<keyword id="KW-0689">Ribosomal protein</keyword>
<keyword id="KW-0694">RNA-binding</keyword>
<keyword id="KW-0699">rRNA-binding</keyword>
<feature type="chain" id="PRO_0000290795" description="Small ribosomal subunit protein uS8">
    <location>
        <begin position="1"/>
        <end position="130"/>
    </location>
</feature>
<accession>Q0VSI9</accession>
<reference key="1">
    <citation type="journal article" date="2006" name="Nat. Biotechnol.">
        <title>Genome sequence of the ubiquitous hydrocarbon-degrading marine bacterium Alcanivorax borkumensis.</title>
        <authorList>
            <person name="Schneiker S."/>
            <person name="Martins dos Santos V.A.P."/>
            <person name="Bartels D."/>
            <person name="Bekel T."/>
            <person name="Brecht M."/>
            <person name="Buhrmester J."/>
            <person name="Chernikova T.N."/>
            <person name="Denaro R."/>
            <person name="Ferrer M."/>
            <person name="Gertler C."/>
            <person name="Goesmann A."/>
            <person name="Golyshina O.V."/>
            <person name="Kaminski F."/>
            <person name="Khachane A.N."/>
            <person name="Lang S."/>
            <person name="Linke B."/>
            <person name="McHardy A.C."/>
            <person name="Meyer F."/>
            <person name="Nechitaylo T."/>
            <person name="Puehler A."/>
            <person name="Regenhardt D."/>
            <person name="Rupp O."/>
            <person name="Sabirova J.S."/>
            <person name="Selbitschka W."/>
            <person name="Yakimov M.M."/>
            <person name="Timmis K.N."/>
            <person name="Vorhoelter F.-J."/>
            <person name="Weidner S."/>
            <person name="Kaiser O."/>
            <person name="Golyshin P.N."/>
        </authorList>
    </citation>
    <scope>NUCLEOTIDE SEQUENCE [LARGE SCALE GENOMIC DNA]</scope>
    <source>
        <strain>ATCC 700651 / DSM 11573 / NCIMB 13689 / SK2</strain>
    </source>
</reference>
<comment type="function">
    <text evidence="1">One of the primary rRNA binding proteins, it binds directly to 16S rRNA central domain where it helps coordinate assembly of the platform of the 30S subunit.</text>
</comment>
<comment type="subunit">
    <text evidence="1">Part of the 30S ribosomal subunit. Contacts proteins S5 and S12.</text>
</comment>
<comment type="similarity">
    <text evidence="1">Belongs to the universal ribosomal protein uS8 family.</text>
</comment>
<dbReference type="EMBL" id="AM286690">
    <property type="protein sequence ID" value="CAL15859.1"/>
    <property type="molecule type" value="Genomic_DNA"/>
</dbReference>
<dbReference type="RefSeq" id="WP_011587699.1">
    <property type="nucleotide sequence ID" value="NC_008260.1"/>
</dbReference>
<dbReference type="SMR" id="Q0VSI9"/>
<dbReference type="STRING" id="393595.ABO_0411"/>
<dbReference type="KEGG" id="abo:ABO_0411"/>
<dbReference type="eggNOG" id="COG0096">
    <property type="taxonomic scope" value="Bacteria"/>
</dbReference>
<dbReference type="HOGENOM" id="CLU_098428_0_0_6"/>
<dbReference type="OrthoDB" id="9802617at2"/>
<dbReference type="Proteomes" id="UP000008871">
    <property type="component" value="Chromosome"/>
</dbReference>
<dbReference type="GO" id="GO:1990904">
    <property type="term" value="C:ribonucleoprotein complex"/>
    <property type="evidence" value="ECO:0007669"/>
    <property type="project" value="UniProtKB-KW"/>
</dbReference>
<dbReference type="GO" id="GO:0005840">
    <property type="term" value="C:ribosome"/>
    <property type="evidence" value="ECO:0007669"/>
    <property type="project" value="UniProtKB-KW"/>
</dbReference>
<dbReference type="GO" id="GO:0019843">
    <property type="term" value="F:rRNA binding"/>
    <property type="evidence" value="ECO:0007669"/>
    <property type="project" value="UniProtKB-UniRule"/>
</dbReference>
<dbReference type="GO" id="GO:0003735">
    <property type="term" value="F:structural constituent of ribosome"/>
    <property type="evidence" value="ECO:0007669"/>
    <property type="project" value="InterPro"/>
</dbReference>
<dbReference type="GO" id="GO:0006412">
    <property type="term" value="P:translation"/>
    <property type="evidence" value="ECO:0007669"/>
    <property type="project" value="UniProtKB-UniRule"/>
</dbReference>
<dbReference type="FunFam" id="3.30.1370.30:FF:000002">
    <property type="entry name" value="30S ribosomal protein S8"/>
    <property type="match status" value="1"/>
</dbReference>
<dbReference type="FunFam" id="3.30.1490.10:FF:000001">
    <property type="entry name" value="30S ribosomal protein S8"/>
    <property type="match status" value="1"/>
</dbReference>
<dbReference type="Gene3D" id="3.30.1370.30">
    <property type="match status" value="1"/>
</dbReference>
<dbReference type="Gene3D" id="3.30.1490.10">
    <property type="match status" value="1"/>
</dbReference>
<dbReference type="HAMAP" id="MF_01302_B">
    <property type="entry name" value="Ribosomal_uS8_B"/>
    <property type="match status" value="1"/>
</dbReference>
<dbReference type="InterPro" id="IPR000630">
    <property type="entry name" value="Ribosomal_uS8"/>
</dbReference>
<dbReference type="InterPro" id="IPR047863">
    <property type="entry name" value="Ribosomal_uS8_CS"/>
</dbReference>
<dbReference type="InterPro" id="IPR035987">
    <property type="entry name" value="Ribosomal_uS8_sf"/>
</dbReference>
<dbReference type="NCBIfam" id="NF001109">
    <property type="entry name" value="PRK00136.1"/>
    <property type="match status" value="1"/>
</dbReference>
<dbReference type="PANTHER" id="PTHR11758">
    <property type="entry name" value="40S RIBOSOMAL PROTEIN S15A"/>
    <property type="match status" value="1"/>
</dbReference>
<dbReference type="Pfam" id="PF00410">
    <property type="entry name" value="Ribosomal_S8"/>
    <property type="match status" value="1"/>
</dbReference>
<dbReference type="SUPFAM" id="SSF56047">
    <property type="entry name" value="Ribosomal protein S8"/>
    <property type="match status" value="1"/>
</dbReference>
<dbReference type="PROSITE" id="PS00053">
    <property type="entry name" value="RIBOSOMAL_S8"/>
    <property type="match status" value="1"/>
</dbReference>
<proteinExistence type="inferred from homology"/>
<gene>
    <name evidence="1" type="primary">rpsH</name>
    <name type="ordered locus">ABO_0411</name>
</gene>
<sequence length="130" mass="14147">MSMQDTLADMFTRIRNAQMAKKVQVEIPASKAKEAVAKVLKDEGYIAGYEVTGDKKPVMTVELKYYEGSPVIEKIARVSRPGLRVYKSAGEIPKVKDGLGVMIVSTNQGIISDRAARKANIGGELICEVS</sequence>
<evidence type="ECO:0000255" key="1">
    <source>
        <dbReference type="HAMAP-Rule" id="MF_01302"/>
    </source>
</evidence>
<evidence type="ECO:0000305" key="2"/>
<protein>
    <recommendedName>
        <fullName evidence="1">Small ribosomal subunit protein uS8</fullName>
    </recommendedName>
    <alternativeName>
        <fullName evidence="2">30S ribosomal protein S8</fullName>
    </alternativeName>
</protein>
<organism>
    <name type="scientific">Alcanivorax borkumensis (strain ATCC 700651 / DSM 11573 / NCIMB 13689 / SK2)</name>
    <dbReference type="NCBI Taxonomy" id="393595"/>
    <lineage>
        <taxon>Bacteria</taxon>
        <taxon>Pseudomonadati</taxon>
        <taxon>Pseudomonadota</taxon>
        <taxon>Gammaproteobacteria</taxon>
        <taxon>Oceanospirillales</taxon>
        <taxon>Alcanivoracaceae</taxon>
        <taxon>Alcanivorax</taxon>
    </lineage>
</organism>